<feature type="chain" id="PRO_0000306883" description="Ectonucleoside triphosphate diphosphohydrolase 8">
    <location>
        <begin position="1"/>
        <end position="497"/>
    </location>
</feature>
<feature type="topological domain" description="Cytoplasmic" evidence="3">
    <location>
        <begin position="1"/>
        <end position="8"/>
    </location>
</feature>
<feature type="transmembrane region" description="Helical" evidence="3">
    <location>
        <begin position="9"/>
        <end position="29"/>
    </location>
</feature>
<feature type="topological domain" description="Extracellular" evidence="3">
    <location>
        <begin position="30"/>
        <end position="473"/>
    </location>
</feature>
<feature type="transmembrane region" description="Helical" evidence="3">
    <location>
        <begin position="474"/>
        <end position="494"/>
    </location>
</feature>
<feature type="topological domain" description="Cytoplasmic" evidence="3">
    <location>
        <begin position="495"/>
        <end position="497"/>
    </location>
</feature>
<feature type="active site" description="Proton acceptor" evidence="2">
    <location>
        <position position="168"/>
    </location>
</feature>
<feature type="glycosylation site" description="N-linked (GlcNAc...) asparagine" evidence="3">
    <location>
        <position position="306"/>
    </location>
</feature>
<feature type="glycosylation site" description="N-linked (GlcNAc...) asparagine" evidence="3">
    <location>
        <position position="365"/>
    </location>
</feature>
<feature type="disulfide bond" evidence="1">
    <location>
        <begin position="78"/>
        <end position="102"/>
    </location>
</feature>
<feature type="disulfide bond" evidence="1">
    <location>
        <begin position="245"/>
        <end position="294"/>
    </location>
</feature>
<feature type="disulfide bond" evidence="1">
    <location>
        <begin position="331"/>
        <end position="337"/>
    </location>
</feature>
<feature type="disulfide bond" evidence="1">
    <location>
        <begin position="383"/>
        <end position="405"/>
    </location>
</feature>
<feature type="splice variant" id="VSP_028560" description="In isoform 2." evidence="5">
    <location>
        <begin position="263"/>
        <end position="265"/>
    </location>
</feature>
<feature type="splice variant" id="VSP_028561" description="In isoform 2." evidence="5">
    <location>
        <begin position="353"/>
        <end position="389"/>
    </location>
</feature>
<feature type="sequence conflict" description="In Ref. 3; AAH31143." evidence="5" ref="3">
    <original>D</original>
    <variation>N</variation>
    <location>
        <position position="437"/>
    </location>
</feature>
<evidence type="ECO:0000250" key="1"/>
<evidence type="ECO:0000250" key="2">
    <source>
        <dbReference type="UniProtKB" id="O35795"/>
    </source>
</evidence>
<evidence type="ECO:0000255" key="3"/>
<evidence type="ECO:0000269" key="4">
    <source>
    </source>
</evidence>
<evidence type="ECO:0000305" key="5"/>
<reference key="1">
    <citation type="journal article" date="2004" name="Biochemistry">
        <title>Cloning and characterization of mouse nucleoside triphosphate diphosphohydrolase-8.</title>
        <authorList>
            <person name="Bigonnesse F."/>
            <person name="Levesque S.A."/>
            <person name="Kukulski F."/>
            <person name="Lecka J."/>
            <person name="Robson S.C."/>
            <person name="Fernandes M.J."/>
            <person name="Sevigny J."/>
        </authorList>
    </citation>
    <scope>NUCLEOTIDE SEQUENCE [MRNA] (ISOFORM 1)</scope>
    <scope>FUNCTION</scope>
    <scope>ENZYME ACTIVITY</scope>
    <scope>BIOPHYSICOCHEMICAL PROPERTIES</scope>
    <scope>COFACTOR</scope>
    <scope>TISSUE SPECIFICITY</scope>
    <source>
        <strain>C57BL/6J</strain>
        <tissue>Liver</tissue>
    </source>
</reference>
<reference key="2">
    <citation type="journal article" date="2009" name="PLoS Biol.">
        <title>Lineage-specific biology revealed by a finished genome assembly of the mouse.</title>
        <authorList>
            <person name="Church D.M."/>
            <person name="Goodstadt L."/>
            <person name="Hillier L.W."/>
            <person name="Zody M.C."/>
            <person name="Goldstein S."/>
            <person name="She X."/>
            <person name="Bult C.J."/>
            <person name="Agarwala R."/>
            <person name="Cherry J.L."/>
            <person name="DiCuccio M."/>
            <person name="Hlavina W."/>
            <person name="Kapustin Y."/>
            <person name="Meric P."/>
            <person name="Maglott D."/>
            <person name="Birtle Z."/>
            <person name="Marques A.C."/>
            <person name="Graves T."/>
            <person name="Zhou S."/>
            <person name="Teague B."/>
            <person name="Potamousis K."/>
            <person name="Churas C."/>
            <person name="Place M."/>
            <person name="Herschleb J."/>
            <person name="Runnheim R."/>
            <person name="Forrest D."/>
            <person name="Amos-Landgraf J."/>
            <person name="Schwartz D.C."/>
            <person name="Cheng Z."/>
            <person name="Lindblad-Toh K."/>
            <person name="Eichler E.E."/>
            <person name="Ponting C.P."/>
        </authorList>
    </citation>
    <scope>NUCLEOTIDE SEQUENCE [LARGE SCALE GENOMIC DNA]</scope>
    <source>
        <strain>C57BL/6J</strain>
    </source>
</reference>
<reference key="3">
    <citation type="journal article" date="2004" name="Genome Res.">
        <title>The status, quality, and expansion of the NIH full-length cDNA project: the Mammalian Gene Collection (MGC).</title>
        <authorList>
            <consortium name="The MGC Project Team"/>
        </authorList>
    </citation>
    <scope>NUCLEOTIDE SEQUENCE [LARGE SCALE MRNA] (ISOFORM 1)</scope>
    <source>
        <strain>FVB/N</strain>
        <tissue>Kidney</tissue>
    </source>
</reference>
<accession>Q8K0L2</accession>
<accession>A2AJ99</accession>
<accession>Q6UQ22</accession>
<gene>
    <name type="primary">Entpd8</name>
</gene>
<comment type="function">
    <text evidence="4">Canalicular ectonucleoside NTPDase responsible for the main hepatic NTPDase activity. Ectonucleoside NTPDases catalyze the hydrolysis of gamma- and beta-phosphate residues of nucleotides, playing a central role in concentration of extracellular nucleotides. Has activity toward ATP, ADP, UTP and UDP, but not toward AMP.</text>
</comment>
<comment type="catalytic activity">
    <reaction evidence="4">
        <text>a ribonucleoside 5'-triphosphate + 2 H2O = a ribonucleoside 5'-phosphate + 2 phosphate + 2 H(+)</text>
        <dbReference type="Rhea" id="RHEA:36795"/>
        <dbReference type="ChEBI" id="CHEBI:15377"/>
        <dbReference type="ChEBI" id="CHEBI:15378"/>
        <dbReference type="ChEBI" id="CHEBI:43474"/>
        <dbReference type="ChEBI" id="CHEBI:58043"/>
        <dbReference type="ChEBI" id="CHEBI:61557"/>
        <dbReference type="EC" id="3.6.1.5"/>
    </reaction>
</comment>
<comment type="cofactor">
    <cofactor evidence="4">
        <name>Ca(2+)</name>
        <dbReference type="ChEBI" id="CHEBI:29108"/>
    </cofactor>
    <cofactor evidence="4">
        <name>Mg(2+)</name>
        <dbReference type="ChEBI" id="CHEBI:18420"/>
    </cofactor>
    <text evidence="4">Ca(2+) or Mg(2+). Has lower efficiency with Mg(2+).</text>
</comment>
<comment type="biophysicochemical properties">
    <kinetics>
        <KM evidence="4">13 uM for ATP</KM>
        <KM evidence="4">41 uM for ADP</KM>
        <KM evidence="4">47 uM for UTP</KM>
        <KM evidence="4">171 uM for UDP</KM>
    </kinetics>
    <phDependence>
        <text evidence="4">Optimum pH is 5.5-8.0.</text>
    </phDependence>
</comment>
<comment type="subcellular location">
    <subcellularLocation>
        <location evidence="1">Cell membrane</location>
        <topology evidence="1">Multi-pass membrane protein</topology>
    </subcellularLocation>
</comment>
<comment type="alternative products">
    <event type="alternative splicing"/>
    <isoform>
        <id>Q8K0L2-1</id>
        <name>1</name>
        <sequence type="displayed"/>
    </isoform>
    <isoform>
        <id>Q8K0L2-2</id>
        <name>2</name>
        <sequence type="described" ref="VSP_028560 VSP_028561"/>
    </isoform>
</comment>
<comment type="tissue specificity">
    <text evidence="4">Expressed in liver, jejunum and kidney.</text>
</comment>
<comment type="domain">
    <text evidence="1">The transmembranous domains are involved in regulation of enzyme activity.</text>
</comment>
<comment type="PTM">
    <text evidence="1">N-glycosylated.</text>
</comment>
<comment type="similarity">
    <text evidence="5">Belongs to the GDA1/CD39 NTPase family.</text>
</comment>
<keyword id="KW-0025">Alternative splicing</keyword>
<keyword id="KW-0067">ATP-binding</keyword>
<keyword id="KW-0106">Calcium</keyword>
<keyword id="KW-1003">Cell membrane</keyword>
<keyword id="KW-1015">Disulfide bond</keyword>
<keyword id="KW-0325">Glycoprotein</keyword>
<keyword id="KW-0378">Hydrolase</keyword>
<keyword id="KW-0460">Magnesium</keyword>
<keyword id="KW-0472">Membrane</keyword>
<keyword id="KW-0479">Metal-binding</keyword>
<keyword id="KW-0547">Nucleotide-binding</keyword>
<keyword id="KW-1185">Reference proteome</keyword>
<keyword id="KW-0812">Transmembrane</keyword>
<keyword id="KW-1133">Transmembrane helix</keyword>
<dbReference type="EC" id="3.6.1.5"/>
<dbReference type="EMBL" id="AY364442">
    <property type="protein sequence ID" value="AAQ84519.1"/>
    <property type="molecule type" value="mRNA"/>
</dbReference>
<dbReference type="EMBL" id="AL732585">
    <property type="status" value="NOT_ANNOTATED_CDS"/>
    <property type="molecule type" value="Genomic_DNA"/>
</dbReference>
<dbReference type="EMBL" id="BC031143">
    <property type="protein sequence ID" value="AAH31143.2"/>
    <property type="molecule type" value="mRNA"/>
</dbReference>
<dbReference type="CCDS" id="CCDS15748.1">
    <molecule id="Q8K0L2-1"/>
</dbReference>
<dbReference type="RefSeq" id="NP_082369.1">
    <molecule id="Q8K0L2-1"/>
    <property type="nucleotide sequence ID" value="NM_028093.1"/>
</dbReference>
<dbReference type="RefSeq" id="XP_006498425.1">
    <property type="nucleotide sequence ID" value="XM_006498362.3"/>
</dbReference>
<dbReference type="SMR" id="Q8K0L2"/>
<dbReference type="FunCoup" id="Q8K0L2">
    <property type="interactions" value="241"/>
</dbReference>
<dbReference type="STRING" id="10090.ENSMUSP00000110022"/>
<dbReference type="GlyCosmos" id="Q8K0L2">
    <property type="glycosylation" value="2 sites, No reported glycans"/>
</dbReference>
<dbReference type="GlyGen" id="Q8K0L2">
    <property type="glycosylation" value="2 sites"/>
</dbReference>
<dbReference type="iPTMnet" id="Q8K0L2"/>
<dbReference type="PhosphoSitePlus" id="Q8K0L2"/>
<dbReference type="jPOST" id="Q8K0L2"/>
<dbReference type="PaxDb" id="10090-ENSMUSP00000110022"/>
<dbReference type="ProteomicsDB" id="275921">
    <molecule id="Q8K0L2-1"/>
</dbReference>
<dbReference type="ProteomicsDB" id="275922">
    <molecule id="Q8K0L2-2"/>
</dbReference>
<dbReference type="Antibodypedia" id="19016">
    <property type="antibodies" value="148 antibodies from 20 providers"/>
</dbReference>
<dbReference type="Ensembl" id="ENSMUST00000044078.10">
    <molecule id="Q8K0L2-1"/>
    <property type="protein sequence ID" value="ENSMUSP00000040628.4"/>
    <property type="gene ID" value="ENSMUSG00000036813.12"/>
</dbReference>
<dbReference type="Ensembl" id="ENSMUST00000114376.7">
    <molecule id="Q8K0L2-2"/>
    <property type="protein sequence ID" value="ENSMUSP00000110017.2"/>
    <property type="gene ID" value="ENSMUSG00000036813.12"/>
</dbReference>
<dbReference type="Ensembl" id="ENSMUST00000114380.9">
    <molecule id="Q8K0L2-1"/>
    <property type="protein sequence ID" value="ENSMUSP00000110022.3"/>
    <property type="gene ID" value="ENSMUSG00000036813.12"/>
</dbReference>
<dbReference type="GeneID" id="72090"/>
<dbReference type="KEGG" id="mmu:72090"/>
<dbReference type="UCSC" id="uc008iqf.1">
    <molecule id="Q8K0L2-1"/>
    <property type="organism name" value="mouse"/>
</dbReference>
<dbReference type="AGR" id="MGI:1919340"/>
<dbReference type="CTD" id="377841"/>
<dbReference type="MGI" id="MGI:1919340">
    <property type="gene designation" value="Entpd8"/>
</dbReference>
<dbReference type="VEuPathDB" id="HostDB:ENSMUSG00000036813"/>
<dbReference type="eggNOG" id="KOG1386">
    <property type="taxonomic scope" value="Eukaryota"/>
</dbReference>
<dbReference type="GeneTree" id="ENSGT01110000267162"/>
<dbReference type="HOGENOM" id="CLU_010246_2_3_1"/>
<dbReference type="InParanoid" id="Q8K0L2"/>
<dbReference type="OMA" id="FMLNFTN"/>
<dbReference type="OrthoDB" id="6372431at2759"/>
<dbReference type="PhylomeDB" id="Q8K0L2"/>
<dbReference type="TreeFam" id="TF332859"/>
<dbReference type="BRENDA" id="3.6.1.5">
    <property type="organism ID" value="3474"/>
</dbReference>
<dbReference type="Reactome" id="R-MMU-8850843">
    <property type="pathway name" value="Phosphate bond hydrolysis by NTPDase proteins"/>
</dbReference>
<dbReference type="SABIO-RK" id="Q8K0L2"/>
<dbReference type="BioGRID-ORCS" id="72090">
    <property type="hits" value="3 hits in 80 CRISPR screens"/>
</dbReference>
<dbReference type="ChiTaRS" id="Cant1">
    <property type="organism name" value="mouse"/>
</dbReference>
<dbReference type="PRO" id="PR:Q8K0L2"/>
<dbReference type="Proteomes" id="UP000000589">
    <property type="component" value="Chromosome 2"/>
</dbReference>
<dbReference type="RNAct" id="Q8K0L2">
    <property type="molecule type" value="protein"/>
</dbReference>
<dbReference type="Bgee" id="ENSMUSG00000036813">
    <property type="expression patterns" value="Expressed in small intestine Peyer's patch and 35 other cell types or tissues"/>
</dbReference>
<dbReference type="ExpressionAtlas" id="Q8K0L2">
    <property type="expression patterns" value="baseline and differential"/>
</dbReference>
<dbReference type="GO" id="GO:0016020">
    <property type="term" value="C:membrane"/>
    <property type="evidence" value="ECO:0000314"/>
    <property type="project" value="MGI"/>
</dbReference>
<dbReference type="GO" id="GO:0005886">
    <property type="term" value="C:plasma membrane"/>
    <property type="evidence" value="ECO:0007669"/>
    <property type="project" value="UniProtKB-SubCell"/>
</dbReference>
<dbReference type="GO" id="GO:0004050">
    <property type="term" value="F:apyrase activity"/>
    <property type="evidence" value="ECO:0007669"/>
    <property type="project" value="UniProtKB-EC"/>
</dbReference>
<dbReference type="GO" id="GO:0005524">
    <property type="term" value="F:ATP binding"/>
    <property type="evidence" value="ECO:0007669"/>
    <property type="project" value="UniProtKB-KW"/>
</dbReference>
<dbReference type="GO" id="GO:0046872">
    <property type="term" value="F:metal ion binding"/>
    <property type="evidence" value="ECO:0007669"/>
    <property type="project" value="UniProtKB-KW"/>
</dbReference>
<dbReference type="GO" id="GO:0017110">
    <property type="term" value="F:nucleoside diphosphate phosphatase activity"/>
    <property type="evidence" value="ECO:0000314"/>
    <property type="project" value="MGI"/>
</dbReference>
<dbReference type="GO" id="GO:0017111">
    <property type="term" value="F:ribonucleoside triphosphate phosphatase activity"/>
    <property type="evidence" value="ECO:0000314"/>
    <property type="project" value="MGI"/>
</dbReference>
<dbReference type="GO" id="GO:0009133">
    <property type="term" value="P:nucleoside diphosphate biosynthetic process"/>
    <property type="evidence" value="ECO:0000314"/>
    <property type="project" value="MGI"/>
</dbReference>
<dbReference type="GO" id="GO:0009124">
    <property type="term" value="P:nucleoside monophosphate biosynthetic process"/>
    <property type="evidence" value="ECO:0000314"/>
    <property type="project" value="MGI"/>
</dbReference>
<dbReference type="FunFam" id="3.30.420.150:FF:000002">
    <property type="entry name" value="Ectonucleoside triphosphate diphosphohydrolase 1"/>
    <property type="match status" value="1"/>
</dbReference>
<dbReference type="FunFam" id="3.30.420.40:FF:000068">
    <property type="entry name" value="Ectonucleoside triphosphate diphosphohydrolase 1"/>
    <property type="match status" value="1"/>
</dbReference>
<dbReference type="Gene3D" id="3.30.420.40">
    <property type="match status" value="1"/>
</dbReference>
<dbReference type="Gene3D" id="3.30.420.150">
    <property type="entry name" value="Exopolyphosphatase. Domain 2"/>
    <property type="match status" value="1"/>
</dbReference>
<dbReference type="InterPro" id="IPR000407">
    <property type="entry name" value="GDA1_CD39_NTPase"/>
</dbReference>
<dbReference type="PANTHER" id="PTHR11782">
    <property type="entry name" value="ADENOSINE/GUANOSINE DIPHOSPHATASE"/>
    <property type="match status" value="1"/>
</dbReference>
<dbReference type="PANTHER" id="PTHR11782:SF31">
    <property type="entry name" value="ECTONUCLEOSIDE TRIPHOSPHATE DIPHOSPHOHYDROLASE 8"/>
    <property type="match status" value="1"/>
</dbReference>
<dbReference type="Pfam" id="PF01150">
    <property type="entry name" value="GDA1_CD39"/>
    <property type="match status" value="1"/>
</dbReference>
<dbReference type="PROSITE" id="PS01238">
    <property type="entry name" value="GDA1_CD39_NTPASE"/>
    <property type="match status" value="1"/>
</dbReference>
<organism>
    <name type="scientific">Mus musculus</name>
    <name type="common">Mouse</name>
    <dbReference type="NCBI Taxonomy" id="10090"/>
    <lineage>
        <taxon>Eukaryota</taxon>
        <taxon>Metazoa</taxon>
        <taxon>Chordata</taxon>
        <taxon>Craniata</taxon>
        <taxon>Vertebrata</taxon>
        <taxon>Euteleostomi</taxon>
        <taxon>Mammalia</taxon>
        <taxon>Eutheria</taxon>
        <taxon>Euarchontoglires</taxon>
        <taxon>Glires</taxon>
        <taxon>Rodentia</taxon>
        <taxon>Myomorpha</taxon>
        <taxon>Muroidea</taxon>
        <taxon>Muridae</taxon>
        <taxon>Murinae</taxon>
        <taxon>Mus</taxon>
        <taxon>Mus</taxon>
    </lineage>
</organism>
<protein>
    <recommendedName>
        <fullName>Ectonucleoside triphosphate diphosphohydrolase 8</fullName>
        <shortName>E-NTPDase 8</shortName>
        <shortName>NTPDase 8</shortName>
        <shortName>NTPDase8</shortName>
        <ecNumber>3.6.1.5</ecNumber>
    </recommendedName>
</protein>
<name>ENTP8_MOUSE</name>
<proteinExistence type="evidence at protein level"/>
<sequence length="497" mass="54650">MGLSWKERVFMALLGVAAASGLTMLVLILVKAINVLLPADTKFGIVFDAGSSHTSLFVYQWPANKEKDTGVVSQALTCQIEGPGISSYTSDPTQAGESLKSCLEEALALIPQAQHPETPTFLGSTAGMRLLSQKNSSQARDILAAVSQTLSKSPVDFWGAKILAGQDEGAFGWITINYVLGMLLKYSSGQWILPEEGMLVGALDLGGASTQISFVPQGPILDQSTQVTFRLYGANYSVYTHSYLCFGRDQILNRLLAKLAQDRLSSQVAPVRHPCYHSGYQAILPLSSLYDSPCIHTTDSLNHTQNLTVEGTGDPGNCVVALRSLFNFSSCKGQKDCAFNGIYQPPVHGQFYAFSNFYYTFHFLNLTSRQSLNTVNDTVWKFCQKPWKLVEVSYPGQERWLRDYCASGLYILVLLLEGYKFSEETWPNIQFQKQAGDTDIGWTLGFMLNLTGMIPAEAPTHWRAQSYSIWTAGVVFAVLTLVAILGAAAIQIFWTQD</sequence>